<evidence type="ECO:0000255" key="1"/>
<evidence type="ECO:0000305" key="2"/>
<sequence>MFACLRIGRFIRLGNVTVKSTNLVLRCVFIRNFATHADHLFDELPQRDLSSLNSQLSSHLRSGNPNDTLALFLQIHRASPDLSSHTFTPVLGACSLLSYPETGRQVHALMIKQGAETGTISKTALIDMYSKYGHLVDSVRVFESVEEKDLVSWNALLSGFLRNGKGKEALGVFAAMYRERVEISEFTLSSVVKTCASLKILQQGKQVHAMVVVTGRDLVVLGTAMISFYSSVGLINEAMKVYNSLNVHTDEVMLNSLISGCIRNRNYKEAFLLMSRQRPNVRVLSSSLAGCSDNSDLWIGKQIHCVALRNGFVSDSKLCNGLMDMYGKCGQIVQARTIFRAIPSKSVVSWTSMIDAYAVNGDGVKALEIFREMCEEGSGVLPNSVTFLVVISACAHAGLVKEGKECFGMMKEKYRLVPGTEHYVCFIDILSKAGETEEIWRLVERMMENDNQSIPCAIWVAVLSACSLNMDLTRGEYVARRLMEETGPENASIYVLVSNFYAAMGKWDVVEELRGKLKNKGLVKTAGHSLFI</sequence>
<gene>
    <name type="primary">PCMP-E38</name>
    <name type="ordered locus">At5g66500</name>
    <name type="ORF">K1F13.16</name>
</gene>
<feature type="transit peptide" description="Mitochondrion" evidence="1">
    <location>
        <begin position="1"/>
        <end position="33"/>
    </location>
</feature>
<feature type="chain" id="PRO_0000363585" description="Pentatricopeptide repeat-containing protein At5g66500, mitochondrial">
    <location>
        <begin position="34"/>
        <end position="532"/>
    </location>
</feature>
<feature type="repeat" description="PPR 1">
    <location>
        <begin position="48"/>
        <end position="82"/>
    </location>
</feature>
<feature type="repeat" description="PPR 2">
    <location>
        <begin position="83"/>
        <end position="117"/>
    </location>
</feature>
<feature type="repeat" description="PPR 3">
    <location>
        <begin position="118"/>
        <end position="148"/>
    </location>
</feature>
<feature type="repeat" description="PPR 4">
    <location>
        <begin position="149"/>
        <end position="183"/>
    </location>
</feature>
<feature type="repeat" description="PPR 5">
    <location>
        <begin position="184"/>
        <end position="218"/>
    </location>
</feature>
<feature type="repeat" description="PPR 6">
    <location>
        <begin position="223"/>
        <end position="248"/>
    </location>
</feature>
<feature type="repeat" description="PPR 7">
    <location>
        <begin position="250"/>
        <end position="280"/>
    </location>
</feature>
<feature type="repeat" description="PPR 8">
    <location>
        <begin position="281"/>
        <end position="314"/>
    </location>
</feature>
<feature type="repeat" description="PPR 9">
    <location>
        <begin position="315"/>
        <end position="345"/>
    </location>
</feature>
<feature type="repeat" description="PPR 10">
    <location>
        <begin position="346"/>
        <end position="380"/>
    </location>
</feature>
<feature type="repeat" description="PPR 11">
    <location>
        <begin position="383"/>
        <end position="413"/>
    </location>
</feature>
<feature type="repeat" description="PPR 12">
    <location>
        <begin position="419"/>
        <end position="453"/>
    </location>
</feature>
<feature type="region of interest" description="Type E motif; degenerate">
    <location>
        <begin position="458"/>
        <end position="532"/>
    </location>
</feature>
<feature type="sequence conflict" description="In Ref. 3; BX832684." evidence="2" ref="3">
    <original>M</original>
    <variation>I</variation>
    <location>
        <position position="225"/>
    </location>
</feature>
<feature type="sequence conflict" description="In Ref. 3; BX832684." evidence="2" ref="3">
    <original>V</original>
    <variation>I</variation>
    <location>
        <position position="232"/>
    </location>
</feature>
<proteinExistence type="evidence at transcript level"/>
<comment type="subcellular location">
    <subcellularLocation>
        <location evidence="2">Mitochondrion</location>
    </subcellularLocation>
</comment>
<comment type="similarity">
    <text evidence="2">Belongs to the PPR family. PCMP-E subfamily.</text>
</comment>
<comment type="online information" name="Pentatricopeptide repeat proteins">
    <link uri="https://ppr.plantenergy.uwa.edu.au"/>
</comment>
<reference key="1">
    <citation type="journal article" date="1998" name="DNA Res.">
        <title>Structural analysis of Arabidopsis thaliana chromosome 5. VI. Sequence features of the regions of 1,367,185 bp covered by 19 physically assigned P1 and TAC clones.</title>
        <authorList>
            <person name="Kotani H."/>
            <person name="Nakamura Y."/>
            <person name="Sato S."/>
            <person name="Asamizu E."/>
            <person name="Kaneko T."/>
            <person name="Miyajima N."/>
            <person name="Tabata S."/>
        </authorList>
    </citation>
    <scope>NUCLEOTIDE SEQUENCE [LARGE SCALE GENOMIC DNA]</scope>
    <source>
        <strain>cv. Columbia</strain>
    </source>
</reference>
<reference key="2">
    <citation type="journal article" date="2017" name="Plant J.">
        <title>Araport11: a complete reannotation of the Arabidopsis thaliana reference genome.</title>
        <authorList>
            <person name="Cheng C.Y."/>
            <person name="Krishnakumar V."/>
            <person name="Chan A.P."/>
            <person name="Thibaud-Nissen F."/>
            <person name="Schobel S."/>
            <person name="Town C.D."/>
        </authorList>
    </citation>
    <scope>GENOME REANNOTATION</scope>
    <source>
        <strain>cv. Columbia</strain>
    </source>
</reference>
<reference key="3">
    <citation type="journal article" date="2004" name="Genome Res.">
        <title>Whole genome sequence comparisons and 'full-length' cDNA sequences: a combined approach to evaluate and improve Arabidopsis genome annotation.</title>
        <authorList>
            <person name="Castelli V."/>
            <person name="Aury J.-M."/>
            <person name="Jaillon O."/>
            <person name="Wincker P."/>
            <person name="Clepet C."/>
            <person name="Menard M."/>
            <person name="Cruaud C."/>
            <person name="Quetier F."/>
            <person name="Scarpelli C."/>
            <person name="Schaechter V."/>
            <person name="Temple G."/>
            <person name="Caboche M."/>
            <person name="Weissenbach J."/>
            <person name="Salanoubat M."/>
        </authorList>
    </citation>
    <scope>NUCLEOTIDE SEQUENCE [LARGE SCALE MRNA]</scope>
    <source>
        <strain>cv. Columbia</strain>
    </source>
</reference>
<reference key="4">
    <citation type="journal article" date="2000" name="Plant Mol. Biol.">
        <title>In Arabidopsis thaliana, 1% of the genome codes for a novel protein family unique to plants.</title>
        <authorList>
            <person name="Aubourg S."/>
            <person name="Boudet N."/>
            <person name="Kreis M."/>
            <person name="Lecharny A."/>
        </authorList>
    </citation>
    <scope>GENE FAMILY</scope>
</reference>
<reference key="5">
    <citation type="journal article" date="2004" name="Plant Cell">
        <title>Genome-wide analysis of Arabidopsis pentatricopeptide repeat proteins reveals their essential role in organelle biogenesis.</title>
        <authorList>
            <person name="Lurin C."/>
            <person name="Andres C."/>
            <person name="Aubourg S."/>
            <person name="Bellaoui M."/>
            <person name="Bitton F."/>
            <person name="Bruyere C."/>
            <person name="Caboche M."/>
            <person name="Debast C."/>
            <person name="Gualberto J."/>
            <person name="Hoffmann B."/>
            <person name="Lecharny A."/>
            <person name="Le Ret M."/>
            <person name="Martin-Magniette M.-L."/>
            <person name="Mireau H."/>
            <person name="Peeters N."/>
            <person name="Renou J.-P."/>
            <person name="Szurek B."/>
            <person name="Taconnat L."/>
            <person name="Small I."/>
        </authorList>
    </citation>
    <scope>GENE FAMILY</scope>
</reference>
<keyword id="KW-0496">Mitochondrion</keyword>
<keyword id="KW-1185">Reference proteome</keyword>
<keyword id="KW-0677">Repeat</keyword>
<keyword id="KW-0809">Transit peptide</keyword>
<protein>
    <recommendedName>
        <fullName>Pentatricopeptide repeat-containing protein At5g66500, mitochondrial</fullName>
    </recommendedName>
</protein>
<dbReference type="EMBL" id="AB013389">
    <property type="protein sequence ID" value="BAB10926.1"/>
    <property type="molecule type" value="Genomic_DNA"/>
</dbReference>
<dbReference type="EMBL" id="CP002688">
    <property type="protein sequence ID" value="AED98221.1"/>
    <property type="molecule type" value="Genomic_DNA"/>
</dbReference>
<dbReference type="EMBL" id="BX832684">
    <property type="status" value="NOT_ANNOTATED_CDS"/>
    <property type="molecule type" value="mRNA"/>
</dbReference>
<dbReference type="RefSeq" id="NP_201451.1">
    <property type="nucleotide sequence ID" value="NM_126048.3"/>
</dbReference>
<dbReference type="SMR" id="Q9FJY9"/>
<dbReference type="FunCoup" id="Q9FJY9">
    <property type="interactions" value="58"/>
</dbReference>
<dbReference type="PaxDb" id="3702-AT5G66500.1"/>
<dbReference type="ProteomicsDB" id="249329"/>
<dbReference type="EnsemblPlants" id="AT5G66500.1">
    <property type="protein sequence ID" value="AT5G66500.1"/>
    <property type="gene ID" value="AT5G66500"/>
</dbReference>
<dbReference type="GeneID" id="836782"/>
<dbReference type="Gramene" id="AT5G66500.1">
    <property type="protein sequence ID" value="AT5G66500.1"/>
    <property type="gene ID" value="AT5G66500"/>
</dbReference>
<dbReference type="KEGG" id="ath:AT5G66500"/>
<dbReference type="Araport" id="AT5G66500"/>
<dbReference type="TAIR" id="AT5G66500"/>
<dbReference type="eggNOG" id="KOG4197">
    <property type="taxonomic scope" value="Eukaryota"/>
</dbReference>
<dbReference type="HOGENOM" id="CLU_002706_0_1_1"/>
<dbReference type="InParanoid" id="Q9FJY9"/>
<dbReference type="OMA" id="HARPCAA"/>
<dbReference type="PhylomeDB" id="Q9FJY9"/>
<dbReference type="PRO" id="PR:Q9FJY9"/>
<dbReference type="Proteomes" id="UP000006548">
    <property type="component" value="Chromosome 5"/>
</dbReference>
<dbReference type="ExpressionAtlas" id="Q9FJY9">
    <property type="expression patterns" value="baseline and differential"/>
</dbReference>
<dbReference type="GO" id="GO:0005739">
    <property type="term" value="C:mitochondrion"/>
    <property type="evidence" value="ECO:0007669"/>
    <property type="project" value="UniProtKB-SubCell"/>
</dbReference>
<dbReference type="GO" id="GO:0003723">
    <property type="term" value="F:RNA binding"/>
    <property type="evidence" value="ECO:0007669"/>
    <property type="project" value="InterPro"/>
</dbReference>
<dbReference type="GO" id="GO:0009451">
    <property type="term" value="P:RNA modification"/>
    <property type="evidence" value="ECO:0007669"/>
    <property type="project" value="InterPro"/>
</dbReference>
<dbReference type="FunFam" id="1.25.40.10:FF:000382">
    <property type="entry name" value="Pentatricopeptide repeat-containing protein"/>
    <property type="match status" value="1"/>
</dbReference>
<dbReference type="FunFam" id="1.25.40.10:FF:002314">
    <property type="entry name" value="Pentatricopeptide repeat-containing protein At5g66500, mitochondrial"/>
    <property type="match status" value="1"/>
</dbReference>
<dbReference type="FunFam" id="1.25.40.10:FF:000439">
    <property type="entry name" value="Pentatricopeptide repeat-containing protein mitochondrial"/>
    <property type="match status" value="1"/>
</dbReference>
<dbReference type="Gene3D" id="1.25.40.10">
    <property type="entry name" value="Tetratricopeptide repeat domain"/>
    <property type="match status" value="3"/>
</dbReference>
<dbReference type="InterPro" id="IPR046848">
    <property type="entry name" value="E_motif"/>
</dbReference>
<dbReference type="InterPro" id="IPR002885">
    <property type="entry name" value="Pentatricopeptide_rpt"/>
</dbReference>
<dbReference type="InterPro" id="IPR046960">
    <property type="entry name" value="PPR_At4g14850-like_plant"/>
</dbReference>
<dbReference type="InterPro" id="IPR011990">
    <property type="entry name" value="TPR-like_helical_dom_sf"/>
</dbReference>
<dbReference type="NCBIfam" id="TIGR00756">
    <property type="entry name" value="PPR"/>
    <property type="match status" value="4"/>
</dbReference>
<dbReference type="PANTHER" id="PTHR47926">
    <property type="entry name" value="PENTATRICOPEPTIDE REPEAT-CONTAINING PROTEIN"/>
    <property type="match status" value="1"/>
</dbReference>
<dbReference type="Pfam" id="PF20431">
    <property type="entry name" value="E_motif"/>
    <property type="match status" value="1"/>
</dbReference>
<dbReference type="Pfam" id="PF01535">
    <property type="entry name" value="PPR"/>
    <property type="match status" value="4"/>
</dbReference>
<dbReference type="Pfam" id="PF13041">
    <property type="entry name" value="PPR_2"/>
    <property type="match status" value="2"/>
</dbReference>
<dbReference type="PROSITE" id="PS51375">
    <property type="entry name" value="PPR"/>
    <property type="match status" value="11"/>
</dbReference>
<accession>Q9FJY9</accession>
<organism>
    <name type="scientific">Arabidopsis thaliana</name>
    <name type="common">Mouse-ear cress</name>
    <dbReference type="NCBI Taxonomy" id="3702"/>
    <lineage>
        <taxon>Eukaryota</taxon>
        <taxon>Viridiplantae</taxon>
        <taxon>Streptophyta</taxon>
        <taxon>Embryophyta</taxon>
        <taxon>Tracheophyta</taxon>
        <taxon>Spermatophyta</taxon>
        <taxon>Magnoliopsida</taxon>
        <taxon>eudicotyledons</taxon>
        <taxon>Gunneridae</taxon>
        <taxon>Pentapetalae</taxon>
        <taxon>rosids</taxon>
        <taxon>malvids</taxon>
        <taxon>Brassicales</taxon>
        <taxon>Brassicaceae</taxon>
        <taxon>Camelineae</taxon>
        <taxon>Arabidopsis</taxon>
    </lineage>
</organism>
<name>PP448_ARATH</name>